<proteinExistence type="inferred from homology"/>
<gene>
    <name evidence="1" type="primary">hisA</name>
    <name type="ordered locus">Synpcc7942_1829</name>
    <name type="ORF">sen0020</name>
</gene>
<sequence>MDVIPAIDLLGGQCVRLFQGDYDQAEVYGKDPVGMALRWAEAGAQRLHLVDLDGAKEGSPVNAEAIATIAQRLSIPVQVGGGLRDRDTVARLLDSGVERAILGTVAVERPALVEALAGEFPGQIAVGIDARSGKVATRGWLEDSGLTAVALAQQMADLGACALICTDIGRDGTLQGPNLEELRAIAAAVSIPVIASGGVGSLTDLLSLLPLEAQGVSGVIVGKALYTGAVDLQEALRAIGSGRWQDVAVDDSSRLA</sequence>
<evidence type="ECO:0000255" key="1">
    <source>
        <dbReference type="HAMAP-Rule" id="MF_01014"/>
    </source>
</evidence>
<evidence type="ECO:0000305" key="2"/>
<comment type="catalytic activity">
    <reaction evidence="1">
        <text>1-(5-phospho-beta-D-ribosyl)-5-[(5-phospho-beta-D-ribosylamino)methylideneamino]imidazole-4-carboxamide = 5-[(5-phospho-1-deoxy-D-ribulos-1-ylimino)methylamino]-1-(5-phospho-beta-D-ribosyl)imidazole-4-carboxamide</text>
        <dbReference type="Rhea" id="RHEA:15469"/>
        <dbReference type="ChEBI" id="CHEBI:58435"/>
        <dbReference type="ChEBI" id="CHEBI:58525"/>
        <dbReference type="EC" id="5.3.1.16"/>
    </reaction>
</comment>
<comment type="pathway">
    <text evidence="1">Amino-acid biosynthesis; L-histidine biosynthesis; L-histidine from 5-phospho-alpha-D-ribose 1-diphosphate: step 4/9.</text>
</comment>
<comment type="subcellular location">
    <subcellularLocation>
        <location evidence="1">Cytoplasm</location>
    </subcellularLocation>
</comment>
<comment type="similarity">
    <text evidence="1">Belongs to the HisA/HisF family.</text>
</comment>
<dbReference type="EC" id="5.3.1.16" evidence="1"/>
<dbReference type="EMBL" id="AY157498">
    <property type="protein sequence ID" value="AAN46174.1"/>
    <property type="molecule type" value="Genomic_DNA"/>
</dbReference>
<dbReference type="EMBL" id="CP000100">
    <property type="protein sequence ID" value="ABB57859.1"/>
    <property type="molecule type" value="Genomic_DNA"/>
</dbReference>
<dbReference type="RefSeq" id="WP_011244575.1">
    <property type="nucleotide sequence ID" value="NZ_JACJTX010000001.1"/>
</dbReference>
<dbReference type="SMR" id="Q8GJM0"/>
<dbReference type="STRING" id="1140.Synpcc7942_1829"/>
<dbReference type="PaxDb" id="1140-Synpcc7942_1829"/>
<dbReference type="GeneID" id="72430700"/>
<dbReference type="KEGG" id="syf:Synpcc7942_1829"/>
<dbReference type="eggNOG" id="COG0106">
    <property type="taxonomic scope" value="Bacteria"/>
</dbReference>
<dbReference type="HOGENOM" id="CLU_048577_1_1_3"/>
<dbReference type="OrthoDB" id="9807749at2"/>
<dbReference type="BioCyc" id="SYNEL:SYNPCC7942_1829-MONOMER"/>
<dbReference type="UniPathway" id="UPA00031">
    <property type="reaction ID" value="UER00009"/>
</dbReference>
<dbReference type="Proteomes" id="UP000889800">
    <property type="component" value="Chromosome"/>
</dbReference>
<dbReference type="GO" id="GO:0005737">
    <property type="term" value="C:cytoplasm"/>
    <property type="evidence" value="ECO:0007669"/>
    <property type="project" value="UniProtKB-SubCell"/>
</dbReference>
<dbReference type="GO" id="GO:0003949">
    <property type="term" value="F:1-(5-phosphoribosyl)-5-[(5-phosphoribosylamino)methylideneamino]imidazole-4-carboxamide isomerase activity"/>
    <property type="evidence" value="ECO:0007669"/>
    <property type="project" value="UniProtKB-UniRule"/>
</dbReference>
<dbReference type="GO" id="GO:0000105">
    <property type="term" value="P:L-histidine biosynthetic process"/>
    <property type="evidence" value="ECO:0007669"/>
    <property type="project" value="UniProtKB-UniRule"/>
</dbReference>
<dbReference type="GO" id="GO:0000162">
    <property type="term" value="P:L-tryptophan biosynthetic process"/>
    <property type="evidence" value="ECO:0007669"/>
    <property type="project" value="TreeGrafter"/>
</dbReference>
<dbReference type="CDD" id="cd04732">
    <property type="entry name" value="HisA"/>
    <property type="match status" value="1"/>
</dbReference>
<dbReference type="FunFam" id="3.20.20.70:FF:000009">
    <property type="entry name" value="1-(5-phosphoribosyl)-5-[(5-phosphoribosylamino)methylideneamino] imidazole-4-carboxamide isomerase"/>
    <property type="match status" value="1"/>
</dbReference>
<dbReference type="Gene3D" id="3.20.20.70">
    <property type="entry name" value="Aldolase class I"/>
    <property type="match status" value="1"/>
</dbReference>
<dbReference type="HAMAP" id="MF_01014">
    <property type="entry name" value="HisA"/>
    <property type="match status" value="1"/>
</dbReference>
<dbReference type="InterPro" id="IPR013785">
    <property type="entry name" value="Aldolase_TIM"/>
</dbReference>
<dbReference type="InterPro" id="IPR006062">
    <property type="entry name" value="His_biosynth"/>
</dbReference>
<dbReference type="InterPro" id="IPR006063">
    <property type="entry name" value="HisA_bact_arch"/>
</dbReference>
<dbReference type="InterPro" id="IPR044524">
    <property type="entry name" value="Isoase_HisA-like"/>
</dbReference>
<dbReference type="InterPro" id="IPR023016">
    <property type="entry name" value="Isoase_HisA-like_bact"/>
</dbReference>
<dbReference type="InterPro" id="IPR011060">
    <property type="entry name" value="RibuloseP-bd_barrel"/>
</dbReference>
<dbReference type="NCBIfam" id="TIGR00007">
    <property type="entry name" value="1-(5-phosphoribosyl)-5-[(5-phosphoribosylamino)methylideneamino]imidazole-4-carboxamide isomerase"/>
    <property type="match status" value="1"/>
</dbReference>
<dbReference type="NCBIfam" id="NF010112">
    <property type="entry name" value="PRK13585.1"/>
    <property type="match status" value="1"/>
</dbReference>
<dbReference type="PANTHER" id="PTHR43090">
    <property type="entry name" value="1-(5-PHOSPHORIBOSYL)-5-[(5-PHOSPHORIBOSYLAMINO)METHYLIDENEAMINO] IMIDAZOLE-4-CARBOXAMIDE ISOMERASE"/>
    <property type="match status" value="1"/>
</dbReference>
<dbReference type="PANTHER" id="PTHR43090:SF2">
    <property type="entry name" value="1-(5-PHOSPHORIBOSYL)-5-[(5-PHOSPHORIBOSYLAMINO)METHYLIDENEAMINO] IMIDAZOLE-4-CARBOXAMIDE ISOMERASE"/>
    <property type="match status" value="1"/>
</dbReference>
<dbReference type="Pfam" id="PF00977">
    <property type="entry name" value="His_biosynth"/>
    <property type="match status" value="1"/>
</dbReference>
<dbReference type="SUPFAM" id="SSF51366">
    <property type="entry name" value="Ribulose-phoshate binding barrel"/>
    <property type="match status" value="1"/>
</dbReference>
<feature type="chain" id="PRO_0000142064" description="1-(5-phosphoribosyl)-5-[(5-phosphoribosylamino)methylideneamino] imidazole-4-carboxamide isomerase">
    <location>
        <begin position="1"/>
        <end position="256"/>
    </location>
</feature>
<feature type="active site" description="Proton acceptor" evidence="1">
    <location>
        <position position="8"/>
    </location>
</feature>
<feature type="active site" description="Proton donor" evidence="1">
    <location>
        <position position="129"/>
    </location>
</feature>
<feature type="sequence conflict" description="In Ref. 1; AAN46174." evidence="2" ref="1">
    <original>RGWLEDSG</original>
    <variation>GAAGRFW</variation>
    <location>
        <begin position="138"/>
        <end position="145"/>
    </location>
</feature>
<feature type="sequence conflict" description="In Ref. 1; AAN46174." evidence="2" ref="1">
    <original>AQQMADLGACALICTDIGRDGTLQ</original>
    <variation>HSRWQTWRLRTDLHRHWARWHAS</variation>
    <location>
        <begin position="152"/>
        <end position="175"/>
    </location>
</feature>
<feature type="sequence conflict" description="In Ref. 1; AAN46174." evidence="2" ref="1">
    <original>L</original>
    <variation>F</variation>
    <location>
        <position position="225"/>
    </location>
</feature>
<name>HIS4_SYNE7</name>
<protein>
    <recommendedName>
        <fullName evidence="1">1-(5-phosphoribosyl)-5-[(5-phosphoribosylamino)methylideneamino] imidazole-4-carboxamide isomerase</fullName>
        <ecNumber evidence="1">5.3.1.16</ecNumber>
    </recommendedName>
    <alternativeName>
        <fullName evidence="1">Phosphoribosylformimino-5-aminoimidazole carboxamide ribotide isomerase</fullName>
    </alternativeName>
</protein>
<accession>Q8GJM0</accession>
<accession>Q31M60</accession>
<reference key="1">
    <citation type="submission" date="2002-10" db="EMBL/GenBank/DDBJ databases">
        <title>Synechococcus elongatus PCC7942 cosmid 4G8.</title>
        <authorList>
            <person name="Holtman C.K."/>
            <person name="Sandoval P."/>
            <person name="Chen Y."/>
            <person name="Socias T."/>
            <person name="McMurtry S."/>
            <person name="Gonzalez A."/>
            <person name="Salinas I."/>
            <person name="Golden S.S."/>
            <person name="Youderian P."/>
        </authorList>
    </citation>
    <scope>NUCLEOTIDE SEQUENCE [GENOMIC DNA]</scope>
</reference>
<reference key="2">
    <citation type="submission" date="2005-08" db="EMBL/GenBank/DDBJ databases">
        <title>Complete sequence of chromosome 1 of Synechococcus elongatus PCC 7942.</title>
        <authorList>
            <consortium name="US DOE Joint Genome Institute"/>
            <person name="Copeland A."/>
            <person name="Lucas S."/>
            <person name="Lapidus A."/>
            <person name="Barry K."/>
            <person name="Detter J.C."/>
            <person name="Glavina T."/>
            <person name="Hammon N."/>
            <person name="Israni S."/>
            <person name="Pitluck S."/>
            <person name="Schmutz J."/>
            <person name="Larimer F."/>
            <person name="Land M."/>
            <person name="Kyrpides N."/>
            <person name="Lykidis A."/>
            <person name="Golden S."/>
            <person name="Richardson P."/>
        </authorList>
    </citation>
    <scope>NUCLEOTIDE SEQUENCE [LARGE SCALE GENOMIC DNA]</scope>
    <source>
        <strain>ATCC 33912 / PCC 7942 / FACHB-805</strain>
    </source>
</reference>
<organism>
    <name type="scientific">Synechococcus elongatus (strain ATCC 33912 / PCC 7942 / FACHB-805)</name>
    <name type="common">Anacystis nidulans R2</name>
    <dbReference type="NCBI Taxonomy" id="1140"/>
    <lineage>
        <taxon>Bacteria</taxon>
        <taxon>Bacillati</taxon>
        <taxon>Cyanobacteriota</taxon>
        <taxon>Cyanophyceae</taxon>
        <taxon>Synechococcales</taxon>
        <taxon>Synechococcaceae</taxon>
        <taxon>Synechococcus</taxon>
    </lineage>
</organism>
<keyword id="KW-0028">Amino-acid biosynthesis</keyword>
<keyword id="KW-0963">Cytoplasm</keyword>
<keyword id="KW-0368">Histidine biosynthesis</keyword>
<keyword id="KW-0413">Isomerase</keyword>
<keyword id="KW-1185">Reference proteome</keyword>